<keyword id="KW-0963">Cytoplasm</keyword>
<keyword id="KW-0378">Hydrolase</keyword>
<keyword id="KW-0645">Protease</keyword>
<keyword id="KW-0720">Serine protease</keyword>
<protein>
    <recommendedName>
        <fullName evidence="1">ATP-dependent Clp protease proteolytic subunit</fullName>
        <ecNumber evidence="1">3.4.21.92</ecNumber>
    </recommendedName>
    <alternativeName>
        <fullName evidence="1">Endopeptidase Clp</fullName>
    </alternativeName>
</protein>
<evidence type="ECO:0000255" key="1">
    <source>
        <dbReference type="HAMAP-Rule" id="MF_00444"/>
    </source>
</evidence>
<dbReference type="EC" id="3.4.21.92" evidence="1"/>
<dbReference type="EMBL" id="CP001056">
    <property type="protein sequence ID" value="ACD24933.1"/>
    <property type="molecule type" value="Genomic_DNA"/>
</dbReference>
<dbReference type="SMR" id="B2TPB9"/>
<dbReference type="MEROPS" id="S14.001"/>
<dbReference type="KEGG" id="cbk:CLL_A2889"/>
<dbReference type="PATRIC" id="fig|935198.13.peg.2851"/>
<dbReference type="HOGENOM" id="CLU_058707_3_2_9"/>
<dbReference type="Proteomes" id="UP000001195">
    <property type="component" value="Chromosome"/>
</dbReference>
<dbReference type="GO" id="GO:0005737">
    <property type="term" value="C:cytoplasm"/>
    <property type="evidence" value="ECO:0007669"/>
    <property type="project" value="UniProtKB-SubCell"/>
</dbReference>
<dbReference type="GO" id="GO:0009368">
    <property type="term" value="C:endopeptidase Clp complex"/>
    <property type="evidence" value="ECO:0007669"/>
    <property type="project" value="TreeGrafter"/>
</dbReference>
<dbReference type="GO" id="GO:0004176">
    <property type="term" value="F:ATP-dependent peptidase activity"/>
    <property type="evidence" value="ECO:0007669"/>
    <property type="project" value="InterPro"/>
</dbReference>
<dbReference type="GO" id="GO:0051117">
    <property type="term" value="F:ATPase binding"/>
    <property type="evidence" value="ECO:0007669"/>
    <property type="project" value="TreeGrafter"/>
</dbReference>
<dbReference type="GO" id="GO:0004252">
    <property type="term" value="F:serine-type endopeptidase activity"/>
    <property type="evidence" value="ECO:0007669"/>
    <property type="project" value="UniProtKB-UniRule"/>
</dbReference>
<dbReference type="GO" id="GO:0006515">
    <property type="term" value="P:protein quality control for misfolded or incompletely synthesized proteins"/>
    <property type="evidence" value="ECO:0007669"/>
    <property type="project" value="TreeGrafter"/>
</dbReference>
<dbReference type="CDD" id="cd07017">
    <property type="entry name" value="S14_ClpP_2"/>
    <property type="match status" value="1"/>
</dbReference>
<dbReference type="FunFam" id="3.90.226.10:FF:000001">
    <property type="entry name" value="ATP-dependent Clp protease proteolytic subunit"/>
    <property type="match status" value="1"/>
</dbReference>
<dbReference type="Gene3D" id="3.90.226.10">
    <property type="entry name" value="2-enoyl-CoA Hydratase, Chain A, domain 1"/>
    <property type="match status" value="1"/>
</dbReference>
<dbReference type="HAMAP" id="MF_00444">
    <property type="entry name" value="ClpP"/>
    <property type="match status" value="1"/>
</dbReference>
<dbReference type="InterPro" id="IPR001907">
    <property type="entry name" value="ClpP"/>
</dbReference>
<dbReference type="InterPro" id="IPR029045">
    <property type="entry name" value="ClpP/crotonase-like_dom_sf"/>
</dbReference>
<dbReference type="InterPro" id="IPR023562">
    <property type="entry name" value="ClpP/TepA"/>
</dbReference>
<dbReference type="InterPro" id="IPR033135">
    <property type="entry name" value="ClpP_His_AS"/>
</dbReference>
<dbReference type="InterPro" id="IPR018215">
    <property type="entry name" value="ClpP_Ser_AS"/>
</dbReference>
<dbReference type="NCBIfam" id="TIGR00493">
    <property type="entry name" value="clpP"/>
    <property type="match status" value="1"/>
</dbReference>
<dbReference type="NCBIfam" id="NF001368">
    <property type="entry name" value="PRK00277.1"/>
    <property type="match status" value="1"/>
</dbReference>
<dbReference type="NCBIfam" id="NF009205">
    <property type="entry name" value="PRK12553.1"/>
    <property type="match status" value="1"/>
</dbReference>
<dbReference type="PANTHER" id="PTHR10381">
    <property type="entry name" value="ATP-DEPENDENT CLP PROTEASE PROTEOLYTIC SUBUNIT"/>
    <property type="match status" value="1"/>
</dbReference>
<dbReference type="PANTHER" id="PTHR10381:SF70">
    <property type="entry name" value="ATP-DEPENDENT CLP PROTEASE PROTEOLYTIC SUBUNIT"/>
    <property type="match status" value="1"/>
</dbReference>
<dbReference type="Pfam" id="PF00574">
    <property type="entry name" value="CLP_protease"/>
    <property type="match status" value="1"/>
</dbReference>
<dbReference type="PRINTS" id="PR00127">
    <property type="entry name" value="CLPPROTEASEP"/>
</dbReference>
<dbReference type="SUPFAM" id="SSF52096">
    <property type="entry name" value="ClpP/crotonase"/>
    <property type="match status" value="1"/>
</dbReference>
<dbReference type="PROSITE" id="PS00382">
    <property type="entry name" value="CLP_PROTEASE_HIS"/>
    <property type="match status" value="1"/>
</dbReference>
<dbReference type="PROSITE" id="PS00381">
    <property type="entry name" value="CLP_PROTEASE_SER"/>
    <property type="match status" value="1"/>
</dbReference>
<name>CLPP_CLOBB</name>
<reference key="1">
    <citation type="submission" date="2008-04" db="EMBL/GenBank/DDBJ databases">
        <title>Complete sequence of Clostridium botulinum strain Eklund.</title>
        <authorList>
            <person name="Brinkac L.M."/>
            <person name="Brown J.L."/>
            <person name="Bruce D."/>
            <person name="Detter C."/>
            <person name="Munk C."/>
            <person name="Smith L.A."/>
            <person name="Smith T.J."/>
            <person name="Sutton G."/>
            <person name="Brettin T.S."/>
        </authorList>
    </citation>
    <scope>NUCLEOTIDE SEQUENCE [LARGE SCALE GENOMIC DNA]</scope>
    <source>
        <strain>Eklund 17B / Type B</strain>
    </source>
</reference>
<accession>B2TPB9</accession>
<comment type="function">
    <text evidence="1">Cleaves peptides in various proteins in a process that requires ATP hydrolysis. Has a chymotrypsin-like activity. Plays a major role in the degradation of misfolded proteins.</text>
</comment>
<comment type="catalytic activity">
    <reaction evidence="1">
        <text>Hydrolysis of proteins to small peptides in the presence of ATP and magnesium. alpha-casein is the usual test substrate. In the absence of ATP, only oligopeptides shorter than five residues are hydrolyzed (such as succinyl-Leu-Tyr-|-NHMec, and Leu-Tyr-Leu-|-Tyr-Trp, in which cleavage of the -Tyr-|-Leu- and -Tyr-|-Trp bonds also occurs).</text>
        <dbReference type="EC" id="3.4.21.92"/>
    </reaction>
</comment>
<comment type="subunit">
    <text evidence="1">Fourteen ClpP subunits assemble into 2 heptameric rings which stack back to back to give a disk-like structure with a central cavity, resembling the structure of eukaryotic proteasomes.</text>
</comment>
<comment type="subcellular location">
    <subcellularLocation>
        <location evidence="1">Cytoplasm</location>
    </subcellularLocation>
</comment>
<comment type="similarity">
    <text evidence="1">Belongs to the peptidase S14 family.</text>
</comment>
<proteinExistence type="inferred from homology"/>
<organism>
    <name type="scientific">Clostridium botulinum (strain Eklund 17B / Type B)</name>
    <dbReference type="NCBI Taxonomy" id="935198"/>
    <lineage>
        <taxon>Bacteria</taxon>
        <taxon>Bacillati</taxon>
        <taxon>Bacillota</taxon>
        <taxon>Clostridia</taxon>
        <taxon>Eubacteriales</taxon>
        <taxon>Clostridiaceae</taxon>
        <taxon>Clostridium</taxon>
    </lineage>
</organism>
<gene>
    <name evidence="1" type="primary">clpP</name>
    <name type="ordered locus">CLL_A2889</name>
</gene>
<feature type="chain" id="PRO_1000189636" description="ATP-dependent Clp protease proteolytic subunit">
    <location>
        <begin position="1"/>
        <end position="199"/>
    </location>
</feature>
<feature type="active site" description="Nucleophile" evidence="1">
    <location>
        <position position="98"/>
    </location>
</feature>
<feature type="active site" evidence="1">
    <location>
        <position position="123"/>
    </location>
</feature>
<sequence>MSLVPMVVEQTSRGERSYDIFSRLLKERIIMLSGEVNDDSSNLIVSQLLFLESEDPDKDISIYINSPGGSITAGMAIYDTMQYIKPDVSTICVGMAASMGAFLLSSGANGKRYALPNAEIMIHQPLGGFQGQATDIQIHANRILKIKESLNKILSENTNQPLEVIEADVERDNFMTADEAKTYGLVDKVITKNETGKDK</sequence>